<reference key="1">
    <citation type="journal article" date="2001" name="Proc. Natl. Acad. Sci. U.S.A.">
        <title>Complete genome sequence of an M1 strain of Streptococcus pyogenes.</title>
        <authorList>
            <person name="Ferretti J.J."/>
            <person name="McShan W.M."/>
            <person name="Ajdic D.J."/>
            <person name="Savic D.J."/>
            <person name="Savic G."/>
            <person name="Lyon K."/>
            <person name="Primeaux C."/>
            <person name="Sezate S."/>
            <person name="Suvorov A.N."/>
            <person name="Kenton S."/>
            <person name="Lai H.S."/>
            <person name="Lin S.P."/>
            <person name="Qian Y."/>
            <person name="Jia H.G."/>
            <person name="Najar F.Z."/>
            <person name="Ren Q."/>
            <person name="Zhu H."/>
            <person name="Song L."/>
            <person name="White J."/>
            <person name="Yuan X."/>
            <person name="Clifton S.W."/>
            <person name="Roe B.A."/>
            <person name="McLaughlin R.E."/>
        </authorList>
    </citation>
    <scope>NUCLEOTIDE SEQUENCE [LARGE SCALE GENOMIC DNA]</scope>
    <source>
        <strain>ATCC 700294 / SF370 / Serotype M1</strain>
    </source>
</reference>
<reference key="2">
    <citation type="journal article" date="2005" name="J. Infect. Dis.">
        <title>Evolutionary origin and emergence of a highly successful clone of serotype M1 group A Streptococcus involved multiple horizontal gene transfer events.</title>
        <authorList>
            <person name="Sumby P."/>
            <person name="Porcella S.F."/>
            <person name="Madrigal A.G."/>
            <person name="Barbian K.D."/>
            <person name="Virtaneva K."/>
            <person name="Ricklefs S.M."/>
            <person name="Sturdevant D.E."/>
            <person name="Graham M.R."/>
            <person name="Vuopio-Varkila J."/>
            <person name="Hoe N.P."/>
            <person name="Musser J.M."/>
        </authorList>
    </citation>
    <scope>NUCLEOTIDE SEQUENCE [LARGE SCALE GENOMIC DNA]</scope>
    <source>
        <strain>ATCC BAA-947 / MGAS5005 / Serotype M1</strain>
    </source>
</reference>
<sequence>MAIVSAEKFVQAARENGYAVGGFNTNNLEWTQAILRAAEAKQAPVLIQTSMGAAKYMGGYKVCQSLITNLVESMGITVPVAIHLDHGHYEDALECIEVGYTSIMFDGSHLPVEENLAKTAEVVKIAHAKGVSVEAEVGTIGGEEDGIIGKGELAPIEDAKAMVETGIDFLAAGIGNIHGPYPENWEGLALDHLEKLTAAVPGFPIVLHGGSGIPDDQIKEAIRLGVAKVNVNTESQIAFSNATREFARNYEANEAEYDGKKLFDPRKFLAPGMKAVQGAVEERIDVFGSANKA</sequence>
<comment type="function">
    <text evidence="1">Catalyzes the aldol condensation of dihydroxyacetone phosphate (DHAP or glycerone-phosphate) with glyceraldehyde 3-phosphate (G3P) to form fructose 1,6-bisphosphate (FBP) in gluconeogenesis and the reverse reaction in glycolysis.</text>
</comment>
<comment type="catalytic activity">
    <reaction>
        <text>beta-D-fructose 1,6-bisphosphate = D-glyceraldehyde 3-phosphate + dihydroxyacetone phosphate</text>
        <dbReference type="Rhea" id="RHEA:14729"/>
        <dbReference type="ChEBI" id="CHEBI:32966"/>
        <dbReference type="ChEBI" id="CHEBI:57642"/>
        <dbReference type="ChEBI" id="CHEBI:59776"/>
        <dbReference type="EC" id="4.1.2.13"/>
    </reaction>
</comment>
<comment type="cofactor">
    <cofactor evidence="1">
        <name>Zn(2+)</name>
        <dbReference type="ChEBI" id="CHEBI:29105"/>
    </cofactor>
    <text evidence="1">Binds 2 Zn(2+) ions per subunit. One is catalytic and the other provides a structural contribution.</text>
</comment>
<comment type="pathway">
    <text>Carbohydrate degradation; glycolysis; D-glyceraldehyde 3-phosphate and glycerone phosphate from D-glucose: step 4/4.</text>
</comment>
<comment type="similarity">
    <text evidence="2">Belongs to the class II fructose-bisphosphate aldolase family.</text>
</comment>
<feature type="initiator methionine" description="Removed" evidence="1">
    <location>
        <position position="1"/>
    </location>
</feature>
<feature type="chain" id="PRO_0000178747" description="Fructose-bisphosphate aldolase">
    <location>
        <begin position="2"/>
        <end position="293"/>
    </location>
</feature>
<feature type="active site" description="Proton donor" evidence="1">
    <location>
        <position position="85"/>
    </location>
</feature>
<feature type="binding site" evidence="1">
    <location>
        <position position="50"/>
    </location>
    <ligand>
        <name>D-glyceraldehyde 3-phosphate</name>
        <dbReference type="ChEBI" id="CHEBI:59776"/>
    </ligand>
</feature>
<feature type="binding site" evidence="1">
    <location>
        <position position="86"/>
    </location>
    <ligand>
        <name>Zn(2+)</name>
        <dbReference type="ChEBI" id="CHEBI:29105"/>
        <label>1</label>
        <note>catalytic</note>
    </ligand>
</feature>
<feature type="binding site" evidence="1">
    <location>
        <position position="106"/>
    </location>
    <ligand>
        <name>Zn(2+)</name>
        <dbReference type="ChEBI" id="CHEBI:29105"/>
        <label>2</label>
    </ligand>
</feature>
<feature type="binding site" evidence="1">
    <location>
        <position position="136"/>
    </location>
    <ligand>
        <name>Zn(2+)</name>
        <dbReference type="ChEBI" id="CHEBI:29105"/>
        <label>2</label>
    </ligand>
</feature>
<feature type="binding site" evidence="1">
    <location>
        <position position="178"/>
    </location>
    <ligand>
        <name>Zn(2+)</name>
        <dbReference type="ChEBI" id="CHEBI:29105"/>
        <label>1</label>
        <note>catalytic</note>
    </ligand>
</feature>
<feature type="binding site" evidence="1">
    <location>
        <position position="179"/>
    </location>
    <ligand>
        <name>dihydroxyacetone phosphate</name>
        <dbReference type="ChEBI" id="CHEBI:57642"/>
    </ligand>
</feature>
<feature type="binding site" evidence="1">
    <location>
        <position position="208"/>
    </location>
    <ligand>
        <name>Zn(2+)</name>
        <dbReference type="ChEBI" id="CHEBI:29105"/>
        <label>1</label>
        <note>catalytic</note>
    </ligand>
</feature>
<feature type="binding site" evidence="1">
    <location>
        <begin position="209"/>
        <end position="211"/>
    </location>
    <ligand>
        <name>dihydroxyacetone phosphate</name>
        <dbReference type="ChEBI" id="CHEBI:57642"/>
    </ligand>
</feature>
<feature type="binding site" evidence="1">
    <location>
        <begin position="230"/>
        <end position="233"/>
    </location>
    <ligand>
        <name>dihydroxyacetone phosphate</name>
        <dbReference type="ChEBI" id="CHEBI:57642"/>
    </ligand>
</feature>
<evidence type="ECO:0000250" key="1"/>
<evidence type="ECO:0000305" key="2"/>
<proteinExistence type="inferred from homology"/>
<name>ALF_STRP1</name>
<accession>P68905</accession>
<accession>P82486</accession>
<accession>Q48WQ0</accession>
<keyword id="KW-0324">Glycolysis</keyword>
<keyword id="KW-0456">Lyase</keyword>
<keyword id="KW-0479">Metal-binding</keyword>
<keyword id="KW-1185">Reference proteome</keyword>
<keyword id="KW-0862">Zinc</keyword>
<organism>
    <name type="scientific">Streptococcus pyogenes serotype M1</name>
    <dbReference type="NCBI Taxonomy" id="301447"/>
    <lineage>
        <taxon>Bacteria</taxon>
        <taxon>Bacillati</taxon>
        <taxon>Bacillota</taxon>
        <taxon>Bacilli</taxon>
        <taxon>Lactobacillales</taxon>
        <taxon>Streptococcaceae</taxon>
        <taxon>Streptococcus</taxon>
    </lineage>
</organism>
<dbReference type="EC" id="4.1.2.13"/>
<dbReference type="EMBL" id="AE004092">
    <property type="protein sequence ID" value="AAK34600.1"/>
    <property type="molecule type" value="Genomic_DNA"/>
</dbReference>
<dbReference type="EMBL" id="CP000017">
    <property type="protein sequence ID" value="AAZ52225.1"/>
    <property type="molecule type" value="Genomic_DNA"/>
</dbReference>
<dbReference type="RefSeq" id="NP_269879.1">
    <property type="nucleotide sequence ID" value="NC_002737.2"/>
</dbReference>
<dbReference type="SMR" id="P68905"/>
<dbReference type="PaxDb" id="1314-HKU360_01725"/>
<dbReference type="KEGG" id="spy:SPy_1889"/>
<dbReference type="KEGG" id="spz:M5005_Spy1607"/>
<dbReference type="PATRIC" id="fig|160490.10.peg.1639"/>
<dbReference type="HOGENOM" id="CLU_040088_0_1_9"/>
<dbReference type="OMA" id="PRTWGKL"/>
<dbReference type="UniPathway" id="UPA00109">
    <property type="reaction ID" value="UER00183"/>
</dbReference>
<dbReference type="Proteomes" id="UP000000750">
    <property type="component" value="Chromosome"/>
</dbReference>
<dbReference type="GO" id="GO:0004332">
    <property type="term" value="F:fructose-bisphosphate aldolase activity"/>
    <property type="evidence" value="ECO:0007669"/>
    <property type="project" value="UniProtKB-EC"/>
</dbReference>
<dbReference type="GO" id="GO:0008270">
    <property type="term" value="F:zinc ion binding"/>
    <property type="evidence" value="ECO:0007669"/>
    <property type="project" value="InterPro"/>
</dbReference>
<dbReference type="GO" id="GO:0030388">
    <property type="term" value="P:fructose 1,6-bisphosphate metabolic process"/>
    <property type="evidence" value="ECO:0007669"/>
    <property type="project" value="InterPro"/>
</dbReference>
<dbReference type="GO" id="GO:0006096">
    <property type="term" value="P:glycolytic process"/>
    <property type="evidence" value="ECO:0007669"/>
    <property type="project" value="UniProtKB-UniPathway"/>
</dbReference>
<dbReference type="CDD" id="cd00947">
    <property type="entry name" value="TBP_aldolase_IIB"/>
    <property type="match status" value="1"/>
</dbReference>
<dbReference type="FunFam" id="3.20.20.70:FF:000111">
    <property type="entry name" value="Fructose-1,6-bisphosphate aldolase"/>
    <property type="match status" value="1"/>
</dbReference>
<dbReference type="Gene3D" id="3.20.20.70">
    <property type="entry name" value="Aldolase class I"/>
    <property type="match status" value="1"/>
</dbReference>
<dbReference type="InterPro" id="IPR013785">
    <property type="entry name" value="Aldolase_TIM"/>
</dbReference>
<dbReference type="InterPro" id="IPR050246">
    <property type="entry name" value="Class_II_FBP_aldolase"/>
</dbReference>
<dbReference type="InterPro" id="IPR000771">
    <property type="entry name" value="FBA_II"/>
</dbReference>
<dbReference type="InterPro" id="IPR011289">
    <property type="entry name" value="Fruc_bis_ald_class-2"/>
</dbReference>
<dbReference type="NCBIfam" id="TIGR00167">
    <property type="entry name" value="cbbA"/>
    <property type="match status" value="1"/>
</dbReference>
<dbReference type="NCBIfam" id="TIGR01859">
    <property type="entry name" value="fruc_bis_ald"/>
    <property type="match status" value="1"/>
</dbReference>
<dbReference type="NCBIfam" id="NF005590">
    <property type="entry name" value="PRK07315.1"/>
    <property type="match status" value="1"/>
</dbReference>
<dbReference type="PANTHER" id="PTHR30304">
    <property type="entry name" value="D-TAGATOSE-1,6-BISPHOSPHATE ALDOLASE"/>
    <property type="match status" value="1"/>
</dbReference>
<dbReference type="PANTHER" id="PTHR30304:SF0">
    <property type="entry name" value="D-TAGATOSE-1,6-BISPHOSPHATE ALDOLASE SUBUNIT GATY-RELATED"/>
    <property type="match status" value="1"/>
</dbReference>
<dbReference type="Pfam" id="PF01116">
    <property type="entry name" value="F_bP_aldolase"/>
    <property type="match status" value="1"/>
</dbReference>
<dbReference type="PIRSF" id="PIRSF001359">
    <property type="entry name" value="F_bP_aldolase_II"/>
    <property type="match status" value="1"/>
</dbReference>
<dbReference type="SUPFAM" id="SSF51569">
    <property type="entry name" value="Aldolase"/>
    <property type="match status" value="1"/>
</dbReference>
<dbReference type="PROSITE" id="PS00602">
    <property type="entry name" value="ALDOLASE_CLASS_II_1"/>
    <property type="match status" value="1"/>
</dbReference>
<dbReference type="PROSITE" id="PS00806">
    <property type="entry name" value="ALDOLASE_CLASS_II_2"/>
    <property type="match status" value="1"/>
</dbReference>
<protein>
    <recommendedName>
        <fullName>Fructose-bisphosphate aldolase</fullName>
        <shortName>FBP aldolase</shortName>
        <shortName>FBPA</shortName>
        <ecNumber>4.1.2.13</ecNumber>
    </recommendedName>
    <alternativeName>
        <fullName>Fructose-1,6-bisphosphate aldolase</fullName>
    </alternativeName>
</protein>
<gene>
    <name type="primary">fba</name>
    <name type="ordered locus">SPy_1889</name>
    <name type="ordered locus">M5005_Spy1607</name>
</gene>